<dbReference type="EMBL" id="AP009484">
    <property type="protein sequence ID" value="BAH17802.1"/>
    <property type="molecule type" value="Genomic_DNA"/>
</dbReference>
<dbReference type="RefSeq" id="WP_012657000.1">
    <property type="nucleotide sequence ID" value="NC_011999.1"/>
</dbReference>
<dbReference type="SMR" id="B9EC41"/>
<dbReference type="STRING" id="458233.MCCL_1095"/>
<dbReference type="KEGG" id="mcl:MCCL_1095"/>
<dbReference type="eggNOG" id="COG4474">
    <property type="taxonomic scope" value="Bacteria"/>
</dbReference>
<dbReference type="HOGENOM" id="CLU_105319_0_0_9"/>
<dbReference type="OrthoDB" id="2301957at2"/>
<dbReference type="Proteomes" id="UP000001383">
    <property type="component" value="Chromosome"/>
</dbReference>
<dbReference type="Gene3D" id="3.40.50.450">
    <property type="match status" value="1"/>
</dbReference>
<dbReference type="HAMAP" id="MF_01575">
    <property type="entry name" value="UPF0398"/>
    <property type="match status" value="1"/>
</dbReference>
<dbReference type="InterPro" id="IPR010697">
    <property type="entry name" value="YspA"/>
</dbReference>
<dbReference type="NCBIfam" id="NF010181">
    <property type="entry name" value="PRK13660.1"/>
    <property type="match status" value="1"/>
</dbReference>
<dbReference type="PANTHER" id="PTHR38440:SF1">
    <property type="entry name" value="UPF0398 PROTEIN SPR0331"/>
    <property type="match status" value="1"/>
</dbReference>
<dbReference type="PANTHER" id="PTHR38440">
    <property type="entry name" value="UPF0398 PROTEIN YPSA"/>
    <property type="match status" value="1"/>
</dbReference>
<dbReference type="Pfam" id="PF06908">
    <property type="entry name" value="YpsA"/>
    <property type="match status" value="1"/>
</dbReference>
<dbReference type="PIRSF" id="PIRSF021290">
    <property type="entry name" value="DUF1273"/>
    <property type="match status" value="1"/>
</dbReference>
<dbReference type="SUPFAM" id="SSF102405">
    <property type="entry name" value="MCP/YpsA-like"/>
    <property type="match status" value="1"/>
</dbReference>
<feature type="chain" id="PRO_1000185583" description="UPF0398 protein MCCL_1095">
    <location>
        <begin position="1"/>
        <end position="183"/>
    </location>
</feature>
<keyword id="KW-1185">Reference proteome</keyword>
<proteinExistence type="inferred from homology"/>
<sequence>MKSIYITGYKPYELNIFNNKQPEVRYIKLFLQQKLKEYIEDGLEWVIIEGQLGVELWAAEVVIRLKKMYDVKLSIITPFLEHHSKWNEENQLYYNQICARADFITSAHNDIYRGGFQFRNTDQFVLDNTEGTILFYDDEHEASPKFFKQTLIDFASENQYNIDVVTLEDLSDFVNEYMRAKEY</sequence>
<comment type="similarity">
    <text evidence="1">Belongs to the UPF0398 family.</text>
</comment>
<organism>
    <name type="scientific">Macrococcus caseolyticus (strain JCSC5402)</name>
    <name type="common">Macrococcoides caseolyticum</name>
    <dbReference type="NCBI Taxonomy" id="458233"/>
    <lineage>
        <taxon>Bacteria</taxon>
        <taxon>Bacillati</taxon>
        <taxon>Bacillota</taxon>
        <taxon>Bacilli</taxon>
        <taxon>Bacillales</taxon>
        <taxon>Staphylococcaceae</taxon>
        <taxon>Macrococcoides</taxon>
    </lineage>
</organism>
<protein>
    <recommendedName>
        <fullName evidence="1">UPF0398 protein MCCL_1095</fullName>
    </recommendedName>
</protein>
<evidence type="ECO:0000255" key="1">
    <source>
        <dbReference type="HAMAP-Rule" id="MF_01575"/>
    </source>
</evidence>
<gene>
    <name type="ordered locus">MCCL_1095</name>
</gene>
<accession>B9EC41</accession>
<reference key="1">
    <citation type="journal article" date="2009" name="J. Bacteriol.">
        <title>Complete genome sequence of Macrococcus caseolyticus strain JCSCS5402, reflecting the ancestral genome of the human-pathogenic staphylococci.</title>
        <authorList>
            <person name="Baba T."/>
            <person name="Kuwahara-Arai K."/>
            <person name="Uchiyama I."/>
            <person name="Takeuchi F."/>
            <person name="Ito T."/>
            <person name="Hiramatsu K."/>
        </authorList>
    </citation>
    <scope>NUCLEOTIDE SEQUENCE [LARGE SCALE GENOMIC DNA]</scope>
    <source>
        <strain>JCSC5402</strain>
    </source>
</reference>
<name>Y1095_MACCJ</name>